<reference key="1">
    <citation type="journal article" date="2004" name="PLoS Biol.">
        <title>Genomic insights into methanotrophy: the complete genome sequence of Methylococcus capsulatus (Bath).</title>
        <authorList>
            <person name="Ward N.L."/>
            <person name="Larsen O."/>
            <person name="Sakwa J."/>
            <person name="Bruseth L."/>
            <person name="Khouri H.M."/>
            <person name="Durkin A.S."/>
            <person name="Dimitrov G."/>
            <person name="Jiang L."/>
            <person name="Scanlan D."/>
            <person name="Kang K.H."/>
            <person name="Lewis M.R."/>
            <person name="Nelson K.E."/>
            <person name="Methe B.A."/>
            <person name="Wu M."/>
            <person name="Heidelberg J.F."/>
            <person name="Paulsen I.T."/>
            <person name="Fouts D.E."/>
            <person name="Ravel J."/>
            <person name="Tettelin H."/>
            <person name="Ren Q."/>
            <person name="Read T.D."/>
            <person name="DeBoy R.T."/>
            <person name="Seshadri R."/>
            <person name="Salzberg S.L."/>
            <person name="Jensen H.B."/>
            <person name="Birkeland N.K."/>
            <person name="Nelson W.C."/>
            <person name="Dodson R.J."/>
            <person name="Grindhaug S.H."/>
            <person name="Holt I.E."/>
            <person name="Eidhammer I."/>
            <person name="Jonasen I."/>
            <person name="Vanaken S."/>
            <person name="Utterback T.R."/>
            <person name="Feldblyum T.V."/>
            <person name="Fraser C.M."/>
            <person name="Lillehaug J.R."/>
            <person name="Eisen J.A."/>
        </authorList>
    </citation>
    <scope>NUCLEOTIDE SEQUENCE [LARGE SCALE GENOMIC DNA]</scope>
    <source>
        <strain>ATCC 33009 / NCIMB 11132 / Bath</strain>
    </source>
</reference>
<gene>
    <name evidence="1" type="primary">rpsE</name>
    <name type="ordered locus">MCA2355</name>
</gene>
<dbReference type="EMBL" id="AE017282">
    <property type="protein sequence ID" value="AAU91486.1"/>
    <property type="molecule type" value="Genomic_DNA"/>
</dbReference>
<dbReference type="RefSeq" id="WP_010961583.1">
    <property type="nucleotide sequence ID" value="NC_002977.6"/>
</dbReference>
<dbReference type="SMR" id="Q605C9"/>
<dbReference type="STRING" id="243233.MCA2355"/>
<dbReference type="GeneID" id="88224557"/>
<dbReference type="KEGG" id="mca:MCA2355"/>
<dbReference type="eggNOG" id="COG0098">
    <property type="taxonomic scope" value="Bacteria"/>
</dbReference>
<dbReference type="HOGENOM" id="CLU_065898_2_2_6"/>
<dbReference type="Proteomes" id="UP000006821">
    <property type="component" value="Chromosome"/>
</dbReference>
<dbReference type="GO" id="GO:0015935">
    <property type="term" value="C:small ribosomal subunit"/>
    <property type="evidence" value="ECO:0007669"/>
    <property type="project" value="InterPro"/>
</dbReference>
<dbReference type="GO" id="GO:0019843">
    <property type="term" value="F:rRNA binding"/>
    <property type="evidence" value="ECO:0007669"/>
    <property type="project" value="UniProtKB-UniRule"/>
</dbReference>
<dbReference type="GO" id="GO:0003735">
    <property type="term" value="F:structural constituent of ribosome"/>
    <property type="evidence" value="ECO:0007669"/>
    <property type="project" value="InterPro"/>
</dbReference>
<dbReference type="GO" id="GO:0006412">
    <property type="term" value="P:translation"/>
    <property type="evidence" value="ECO:0007669"/>
    <property type="project" value="UniProtKB-UniRule"/>
</dbReference>
<dbReference type="FunFam" id="3.30.160.20:FF:000001">
    <property type="entry name" value="30S ribosomal protein S5"/>
    <property type="match status" value="1"/>
</dbReference>
<dbReference type="FunFam" id="3.30.230.10:FF:000002">
    <property type="entry name" value="30S ribosomal protein S5"/>
    <property type="match status" value="1"/>
</dbReference>
<dbReference type="Gene3D" id="3.30.160.20">
    <property type="match status" value="1"/>
</dbReference>
<dbReference type="Gene3D" id="3.30.230.10">
    <property type="match status" value="1"/>
</dbReference>
<dbReference type="HAMAP" id="MF_01307_B">
    <property type="entry name" value="Ribosomal_uS5_B"/>
    <property type="match status" value="1"/>
</dbReference>
<dbReference type="InterPro" id="IPR020568">
    <property type="entry name" value="Ribosomal_Su5_D2-typ_SF"/>
</dbReference>
<dbReference type="InterPro" id="IPR000851">
    <property type="entry name" value="Ribosomal_uS5"/>
</dbReference>
<dbReference type="InterPro" id="IPR005712">
    <property type="entry name" value="Ribosomal_uS5_bac-type"/>
</dbReference>
<dbReference type="InterPro" id="IPR005324">
    <property type="entry name" value="Ribosomal_uS5_C"/>
</dbReference>
<dbReference type="InterPro" id="IPR013810">
    <property type="entry name" value="Ribosomal_uS5_N"/>
</dbReference>
<dbReference type="InterPro" id="IPR018192">
    <property type="entry name" value="Ribosomal_uS5_N_CS"/>
</dbReference>
<dbReference type="InterPro" id="IPR014721">
    <property type="entry name" value="Ribsml_uS5_D2-typ_fold_subgr"/>
</dbReference>
<dbReference type="NCBIfam" id="TIGR01021">
    <property type="entry name" value="rpsE_bact"/>
    <property type="match status" value="1"/>
</dbReference>
<dbReference type="PANTHER" id="PTHR48277">
    <property type="entry name" value="MITOCHONDRIAL RIBOSOMAL PROTEIN S5"/>
    <property type="match status" value="1"/>
</dbReference>
<dbReference type="PANTHER" id="PTHR48277:SF1">
    <property type="entry name" value="MITOCHONDRIAL RIBOSOMAL PROTEIN S5"/>
    <property type="match status" value="1"/>
</dbReference>
<dbReference type="Pfam" id="PF00333">
    <property type="entry name" value="Ribosomal_S5"/>
    <property type="match status" value="1"/>
</dbReference>
<dbReference type="Pfam" id="PF03719">
    <property type="entry name" value="Ribosomal_S5_C"/>
    <property type="match status" value="1"/>
</dbReference>
<dbReference type="SUPFAM" id="SSF54768">
    <property type="entry name" value="dsRNA-binding domain-like"/>
    <property type="match status" value="1"/>
</dbReference>
<dbReference type="SUPFAM" id="SSF54211">
    <property type="entry name" value="Ribosomal protein S5 domain 2-like"/>
    <property type="match status" value="1"/>
</dbReference>
<dbReference type="PROSITE" id="PS00585">
    <property type="entry name" value="RIBOSOMAL_S5"/>
    <property type="match status" value="1"/>
</dbReference>
<dbReference type="PROSITE" id="PS50881">
    <property type="entry name" value="S5_DSRBD"/>
    <property type="match status" value="1"/>
</dbReference>
<protein>
    <recommendedName>
        <fullName evidence="1">Small ribosomal subunit protein uS5</fullName>
    </recommendedName>
    <alternativeName>
        <fullName evidence="2">30S ribosomal protein S5</fullName>
    </alternativeName>
</protein>
<proteinExistence type="inferred from homology"/>
<comment type="function">
    <text evidence="1">With S4 and S12 plays an important role in translational accuracy.</text>
</comment>
<comment type="function">
    <text evidence="1">Located at the back of the 30S subunit body where it stabilizes the conformation of the head with respect to the body.</text>
</comment>
<comment type="subunit">
    <text evidence="1">Part of the 30S ribosomal subunit. Contacts proteins S4 and S8.</text>
</comment>
<comment type="domain">
    <text>The N-terminal domain interacts with the head of the 30S subunit; the C-terminal domain interacts with the body and contacts protein S4. The interaction surface between S4 and S5 is involved in control of translational fidelity.</text>
</comment>
<comment type="similarity">
    <text evidence="1">Belongs to the universal ribosomal protein uS5 family.</text>
</comment>
<feature type="chain" id="PRO_0000131543" description="Small ribosomal subunit protein uS5">
    <location>
        <begin position="1"/>
        <end position="169"/>
    </location>
</feature>
<feature type="domain" description="S5 DRBM" evidence="1">
    <location>
        <begin position="14"/>
        <end position="77"/>
    </location>
</feature>
<accession>Q605C9</accession>
<sequence>MANVNIQAGAGEGLQEKLVAVRRVSKVVKGGRQFGFTALTVVGDGNGRVGFGLSKAREVPVAIQKSMEQARKNMRKVALNGQTLHHPVTAAAGAAKVHMQPASEGTGIIAGGAMRAVFEVVGVHNVLAKCIGTNNPINVVRATIKGLTALRDPKSVAAKRGMTVEELLG</sequence>
<evidence type="ECO:0000255" key="1">
    <source>
        <dbReference type="HAMAP-Rule" id="MF_01307"/>
    </source>
</evidence>
<evidence type="ECO:0000305" key="2"/>
<organism>
    <name type="scientific">Methylococcus capsulatus (strain ATCC 33009 / NCIMB 11132 / Bath)</name>
    <dbReference type="NCBI Taxonomy" id="243233"/>
    <lineage>
        <taxon>Bacteria</taxon>
        <taxon>Pseudomonadati</taxon>
        <taxon>Pseudomonadota</taxon>
        <taxon>Gammaproteobacteria</taxon>
        <taxon>Methylococcales</taxon>
        <taxon>Methylococcaceae</taxon>
        <taxon>Methylococcus</taxon>
    </lineage>
</organism>
<name>RS5_METCA</name>
<keyword id="KW-1185">Reference proteome</keyword>
<keyword id="KW-0687">Ribonucleoprotein</keyword>
<keyword id="KW-0689">Ribosomal protein</keyword>
<keyword id="KW-0694">RNA-binding</keyword>
<keyword id="KW-0699">rRNA-binding</keyword>